<proteinExistence type="evidence at protein level"/>
<feature type="chain" id="PRO_0000134067" description="Bifunctional enolase 2/transcriptional activator">
    <location>
        <begin position="1"/>
        <end position="444"/>
    </location>
</feature>
<feature type="active site" description="Proton donor" evidence="1">
    <location>
        <position position="215"/>
    </location>
</feature>
<feature type="active site" description="Proton acceptor" evidence="1">
    <location>
        <position position="352"/>
    </location>
</feature>
<feature type="binding site" evidence="1">
    <location>
        <position position="163"/>
    </location>
    <ligand>
        <name>substrate</name>
    </ligand>
</feature>
<feature type="binding site" evidence="1">
    <location>
        <position position="172"/>
    </location>
    <ligand>
        <name>substrate</name>
    </ligand>
</feature>
<feature type="binding site" evidence="1">
    <location>
        <position position="250"/>
    </location>
    <ligand>
        <name>Mg(2+)</name>
        <dbReference type="ChEBI" id="CHEBI:18420"/>
    </ligand>
</feature>
<feature type="binding site" evidence="1">
    <location>
        <position position="300"/>
    </location>
    <ligand>
        <name>Mg(2+)</name>
        <dbReference type="ChEBI" id="CHEBI:18420"/>
    </ligand>
</feature>
<feature type="binding site" evidence="1">
    <location>
        <position position="300"/>
    </location>
    <ligand>
        <name>substrate</name>
    </ligand>
</feature>
<feature type="binding site" evidence="1">
    <location>
        <position position="327"/>
    </location>
    <ligand>
        <name>Mg(2+)</name>
        <dbReference type="ChEBI" id="CHEBI:18420"/>
    </ligand>
</feature>
<feature type="binding site" evidence="1">
    <location>
        <position position="327"/>
    </location>
    <ligand>
        <name>substrate</name>
    </ligand>
</feature>
<feature type="binding site" evidence="1">
    <location>
        <begin position="379"/>
        <end position="382"/>
    </location>
    <ligand>
        <name>substrate</name>
    </ligand>
</feature>
<feature type="binding site" evidence="1">
    <location>
        <position position="403"/>
    </location>
    <ligand>
        <name>substrate</name>
    </ligand>
</feature>
<feature type="mutagenesis site" description="Impairs cold-responsive gene transcription." evidence="2">
    <original>G</original>
    <variation>S</variation>
    <location>
        <position position="326"/>
    </location>
</feature>
<feature type="sequence conflict" description="In Ref. 4; AAL06912." evidence="6" ref="4">
    <original>I</original>
    <variation>V</variation>
    <location>
        <position position="73"/>
    </location>
</feature>
<feature type="sequence conflict" description="In Ref. 4; AAM12985." evidence="6" ref="4">
    <original>G</original>
    <variation>D</variation>
    <location>
        <position position="160"/>
    </location>
</feature>
<feature type="sequence conflict" description="In Ref. 4; AAL59917." evidence="6" ref="4">
    <original>Q</original>
    <variation>H</variation>
    <location>
        <position position="207"/>
    </location>
</feature>
<feature type="sequence conflict" description="In Ref. 4; AAL06912." evidence="6" ref="4">
    <original>E</original>
    <variation>K</variation>
    <location>
        <position position="386"/>
    </location>
</feature>
<gene>
    <name type="primary">ENO2</name>
    <name type="synonym">LOS2</name>
    <name type="ordered locus">At2g36530</name>
    <name type="ORF">F1O11.16</name>
</gene>
<keyword id="KW-0963">Cytoplasm</keyword>
<keyword id="KW-0238">DNA-binding</keyword>
<keyword id="KW-0324">Glycolysis</keyword>
<keyword id="KW-0456">Lyase</keyword>
<keyword id="KW-0460">Magnesium</keyword>
<keyword id="KW-0472">Membrane</keyword>
<keyword id="KW-0479">Metal-binding</keyword>
<keyword id="KW-0496">Mitochondrion</keyword>
<keyword id="KW-1000">Mitochondrion outer membrane</keyword>
<keyword id="KW-0539">Nucleus</keyword>
<keyword id="KW-1185">Reference proteome</keyword>
<keyword id="KW-0678">Repressor</keyword>
<keyword id="KW-0804">Transcription</keyword>
<keyword id="KW-0805">Transcription regulation</keyword>
<dbReference type="EC" id="4.2.1.11" evidence="2"/>
<dbReference type="EMBL" id="X58107">
    <property type="protein sequence ID" value="CAA41114.1"/>
    <property type="molecule type" value="Genomic_DNA"/>
</dbReference>
<dbReference type="EMBL" id="AC006919">
    <property type="protein sequence ID" value="AAD24635.1"/>
    <property type="molecule type" value="Genomic_DNA"/>
</dbReference>
<dbReference type="EMBL" id="CP002685">
    <property type="protein sequence ID" value="AEC09265.1"/>
    <property type="molecule type" value="Genomic_DNA"/>
</dbReference>
<dbReference type="EMBL" id="AF424603">
    <property type="protein sequence ID" value="AAL11597.1"/>
    <property type="molecule type" value="mRNA"/>
</dbReference>
<dbReference type="EMBL" id="AY054253">
    <property type="protein sequence ID" value="AAL06912.1"/>
    <property type="molecule type" value="mRNA"/>
</dbReference>
<dbReference type="EMBL" id="AY072095">
    <property type="protein sequence ID" value="AAL59917.1"/>
    <property type="molecule type" value="mRNA"/>
</dbReference>
<dbReference type="EMBL" id="AY092986">
    <property type="protein sequence ID" value="AAM12985.1"/>
    <property type="molecule type" value="mRNA"/>
</dbReference>
<dbReference type="EMBL" id="AY150418">
    <property type="protein sequence ID" value="AAN12963.1"/>
    <property type="molecule type" value="mRNA"/>
</dbReference>
<dbReference type="PIR" id="JQ1187">
    <property type="entry name" value="JQ1187"/>
</dbReference>
<dbReference type="RefSeq" id="NP_181192.1">
    <property type="nucleotide sequence ID" value="NM_129209.4"/>
</dbReference>
<dbReference type="SMR" id="P25696"/>
<dbReference type="BioGRID" id="3570">
    <property type="interactions" value="5"/>
</dbReference>
<dbReference type="FunCoup" id="P25696">
    <property type="interactions" value="2285"/>
</dbReference>
<dbReference type="IntAct" id="P25696">
    <property type="interactions" value="1"/>
</dbReference>
<dbReference type="STRING" id="3702.P25696"/>
<dbReference type="iPTMnet" id="P25696"/>
<dbReference type="MetOSite" id="P25696"/>
<dbReference type="SwissPalm" id="P25696"/>
<dbReference type="PaxDb" id="3702-AT2G36530.1"/>
<dbReference type="ProteomicsDB" id="220458"/>
<dbReference type="EnsemblPlants" id="AT2G36530.1">
    <property type="protein sequence ID" value="AT2G36530.1"/>
    <property type="gene ID" value="AT2G36530"/>
</dbReference>
<dbReference type="GeneID" id="818226"/>
<dbReference type="Gramene" id="AT2G36530.1">
    <property type="protein sequence ID" value="AT2G36530.1"/>
    <property type="gene ID" value="AT2G36530"/>
</dbReference>
<dbReference type="KEGG" id="ath:AT2G36530"/>
<dbReference type="Araport" id="AT2G36530"/>
<dbReference type="TAIR" id="AT2G36530">
    <property type="gene designation" value="LOS2"/>
</dbReference>
<dbReference type="eggNOG" id="KOG2670">
    <property type="taxonomic scope" value="Eukaryota"/>
</dbReference>
<dbReference type="HOGENOM" id="CLU_031223_0_0_1"/>
<dbReference type="InParanoid" id="P25696"/>
<dbReference type="OMA" id="MTTECGD"/>
<dbReference type="OrthoDB" id="1739814at2759"/>
<dbReference type="PhylomeDB" id="P25696"/>
<dbReference type="BioCyc" id="ARA:AT2G36530-MONOMER"/>
<dbReference type="BioCyc" id="MetaCyc:AT2G36530-MONOMER"/>
<dbReference type="UniPathway" id="UPA00109">
    <property type="reaction ID" value="UER00187"/>
</dbReference>
<dbReference type="CD-CODE" id="4299E36E">
    <property type="entry name" value="Nucleolus"/>
</dbReference>
<dbReference type="PRO" id="PR:P25696"/>
<dbReference type="Proteomes" id="UP000006548">
    <property type="component" value="Chromosome 2"/>
</dbReference>
<dbReference type="ExpressionAtlas" id="P25696">
    <property type="expression patterns" value="baseline and differential"/>
</dbReference>
<dbReference type="GO" id="GO:0048046">
    <property type="term" value="C:apoplast"/>
    <property type="evidence" value="ECO:0007005"/>
    <property type="project" value="TAIR"/>
</dbReference>
<dbReference type="GO" id="GO:0009507">
    <property type="term" value="C:chloroplast"/>
    <property type="evidence" value="ECO:0007005"/>
    <property type="project" value="TAIR"/>
</dbReference>
<dbReference type="GO" id="GO:0005737">
    <property type="term" value="C:cytoplasm"/>
    <property type="evidence" value="ECO:0000314"/>
    <property type="project" value="TAIR"/>
</dbReference>
<dbReference type="GO" id="GO:0005829">
    <property type="term" value="C:cytosol"/>
    <property type="evidence" value="ECO:0007005"/>
    <property type="project" value="TAIR"/>
</dbReference>
<dbReference type="GO" id="GO:0005783">
    <property type="term" value="C:endoplasmic reticulum"/>
    <property type="evidence" value="ECO:0007005"/>
    <property type="project" value="TAIR"/>
</dbReference>
<dbReference type="GO" id="GO:0005740">
    <property type="term" value="C:mitochondrial envelope"/>
    <property type="evidence" value="ECO:0000314"/>
    <property type="project" value="TAIR"/>
</dbReference>
<dbReference type="GO" id="GO:0005741">
    <property type="term" value="C:mitochondrial outer membrane"/>
    <property type="evidence" value="ECO:0007669"/>
    <property type="project" value="UniProtKB-SubCell"/>
</dbReference>
<dbReference type="GO" id="GO:0005739">
    <property type="term" value="C:mitochondrion"/>
    <property type="evidence" value="ECO:0000314"/>
    <property type="project" value="TAIR"/>
</dbReference>
<dbReference type="GO" id="GO:0005634">
    <property type="term" value="C:nucleus"/>
    <property type="evidence" value="ECO:0000314"/>
    <property type="project" value="TAIR"/>
</dbReference>
<dbReference type="GO" id="GO:0000015">
    <property type="term" value="C:phosphopyruvate hydratase complex"/>
    <property type="evidence" value="ECO:0007669"/>
    <property type="project" value="InterPro"/>
</dbReference>
<dbReference type="GO" id="GO:0005886">
    <property type="term" value="C:plasma membrane"/>
    <property type="evidence" value="ECO:0007005"/>
    <property type="project" value="TAIR"/>
</dbReference>
<dbReference type="GO" id="GO:0009506">
    <property type="term" value="C:plasmodesma"/>
    <property type="evidence" value="ECO:0007005"/>
    <property type="project" value="TAIR"/>
</dbReference>
<dbReference type="GO" id="GO:0005507">
    <property type="term" value="F:copper ion binding"/>
    <property type="evidence" value="ECO:0007005"/>
    <property type="project" value="TAIR"/>
</dbReference>
<dbReference type="GO" id="GO:0003677">
    <property type="term" value="F:DNA binding"/>
    <property type="evidence" value="ECO:0000314"/>
    <property type="project" value="UniProtKB"/>
</dbReference>
<dbReference type="GO" id="GO:0000287">
    <property type="term" value="F:magnesium ion binding"/>
    <property type="evidence" value="ECO:0007669"/>
    <property type="project" value="InterPro"/>
</dbReference>
<dbReference type="GO" id="GO:0004634">
    <property type="term" value="F:phosphopyruvate hydratase activity"/>
    <property type="evidence" value="ECO:0000314"/>
    <property type="project" value="TAIR"/>
</dbReference>
<dbReference type="GO" id="GO:0006096">
    <property type="term" value="P:glycolytic process"/>
    <property type="evidence" value="ECO:0000314"/>
    <property type="project" value="TAIR"/>
</dbReference>
<dbReference type="GO" id="GO:0009737">
    <property type="term" value="P:response to abscisic acid"/>
    <property type="evidence" value="ECO:0000270"/>
    <property type="project" value="TAIR"/>
</dbReference>
<dbReference type="GO" id="GO:0009409">
    <property type="term" value="P:response to cold"/>
    <property type="evidence" value="ECO:0000315"/>
    <property type="project" value="TAIR"/>
</dbReference>
<dbReference type="GO" id="GO:0009416">
    <property type="term" value="P:response to light stimulus"/>
    <property type="evidence" value="ECO:0000315"/>
    <property type="project" value="TAIR"/>
</dbReference>
<dbReference type="CDD" id="cd03313">
    <property type="entry name" value="enolase"/>
    <property type="match status" value="1"/>
</dbReference>
<dbReference type="FunFam" id="3.30.390.10:FF:000001">
    <property type="entry name" value="Enolase"/>
    <property type="match status" value="1"/>
</dbReference>
<dbReference type="FunFam" id="3.20.20.120:FF:000002">
    <property type="entry name" value="Enolase 1"/>
    <property type="match status" value="1"/>
</dbReference>
<dbReference type="Gene3D" id="3.20.20.120">
    <property type="entry name" value="Enolase-like C-terminal domain"/>
    <property type="match status" value="1"/>
</dbReference>
<dbReference type="Gene3D" id="3.30.390.10">
    <property type="entry name" value="Enolase-like, N-terminal domain"/>
    <property type="match status" value="1"/>
</dbReference>
<dbReference type="HAMAP" id="MF_00318">
    <property type="entry name" value="Enolase"/>
    <property type="match status" value="1"/>
</dbReference>
<dbReference type="InterPro" id="IPR000941">
    <property type="entry name" value="Enolase"/>
</dbReference>
<dbReference type="InterPro" id="IPR036849">
    <property type="entry name" value="Enolase-like_C_sf"/>
</dbReference>
<dbReference type="InterPro" id="IPR029017">
    <property type="entry name" value="Enolase-like_N"/>
</dbReference>
<dbReference type="InterPro" id="IPR020810">
    <property type="entry name" value="Enolase_C"/>
</dbReference>
<dbReference type="InterPro" id="IPR020809">
    <property type="entry name" value="Enolase_CS"/>
</dbReference>
<dbReference type="InterPro" id="IPR020811">
    <property type="entry name" value="Enolase_N"/>
</dbReference>
<dbReference type="NCBIfam" id="TIGR01060">
    <property type="entry name" value="eno"/>
    <property type="match status" value="1"/>
</dbReference>
<dbReference type="PANTHER" id="PTHR11902">
    <property type="entry name" value="ENOLASE"/>
    <property type="match status" value="1"/>
</dbReference>
<dbReference type="PANTHER" id="PTHR11902:SF1">
    <property type="entry name" value="ENOLASE"/>
    <property type="match status" value="1"/>
</dbReference>
<dbReference type="Pfam" id="PF00113">
    <property type="entry name" value="Enolase_C"/>
    <property type="match status" value="1"/>
</dbReference>
<dbReference type="Pfam" id="PF03952">
    <property type="entry name" value="Enolase_N"/>
    <property type="match status" value="1"/>
</dbReference>
<dbReference type="PIRSF" id="PIRSF001400">
    <property type="entry name" value="Enolase"/>
    <property type="match status" value="1"/>
</dbReference>
<dbReference type="PRINTS" id="PR00148">
    <property type="entry name" value="ENOLASE"/>
</dbReference>
<dbReference type="SFLD" id="SFLDF00002">
    <property type="entry name" value="enolase"/>
    <property type="match status" value="1"/>
</dbReference>
<dbReference type="SFLD" id="SFLDG00178">
    <property type="entry name" value="enolase"/>
    <property type="match status" value="1"/>
</dbReference>
<dbReference type="SMART" id="SM01192">
    <property type="entry name" value="Enolase_C"/>
    <property type="match status" value="1"/>
</dbReference>
<dbReference type="SMART" id="SM01193">
    <property type="entry name" value="Enolase_N"/>
    <property type="match status" value="1"/>
</dbReference>
<dbReference type="SUPFAM" id="SSF51604">
    <property type="entry name" value="Enolase C-terminal domain-like"/>
    <property type="match status" value="1"/>
</dbReference>
<dbReference type="SUPFAM" id="SSF54826">
    <property type="entry name" value="Enolase N-terminal domain-like"/>
    <property type="match status" value="1"/>
</dbReference>
<dbReference type="PROSITE" id="PS00164">
    <property type="entry name" value="ENOLASE"/>
    <property type="match status" value="1"/>
</dbReference>
<comment type="function">
    <text evidence="2 4">Multifunctional enzyme that acts as an enolase involved in the metabolism and as a positive regulator of cold-responsive gene transcription (PubMed:12032082). Binds to the cis-element the gene promoter of STZ/ZAT10, a zinc finger transcriptional repressor (PubMed:12032082).</text>
</comment>
<comment type="catalytic activity">
    <reaction evidence="2">
        <text>(2R)-2-phosphoglycerate = phosphoenolpyruvate + H2O</text>
        <dbReference type="Rhea" id="RHEA:10164"/>
        <dbReference type="ChEBI" id="CHEBI:15377"/>
        <dbReference type="ChEBI" id="CHEBI:58289"/>
        <dbReference type="ChEBI" id="CHEBI:58702"/>
        <dbReference type="EC" id="4.2.1.11"/>
    </reaction>
    <physiologicalReaction direction="left-to-right" evidence="2">
        <dbReference type="Rhea" id="RHEA:10165"/>
    </physiologicalReaction>
</comment>
<comment type="cofactor">
    <cofactor>
        <name>Mg(2+)</name>
        <dbReference type="ChEBI" id="CHEBI:18420"/>
    </cofactor>
    <text>Mg(2+) is required for catalysis and for stabilizing the dimer.</text>
</comment>
<comment type="pathway">
    <text evidence="2">Carbohydrate degradation; glycolysis; pyruvate from D-glyceraldehyde 3-phosphate: step 4/5.</text>
</comment>
<comment type="subunit">
    <text>Homodimer.</text>
</comment>
<comment type="subcellular location">
    <subcellularLocation>
        <location evidence="2 3">Cytoplasm</location>
        <location evidence="2 3">Cytosol</location>
    </subcellularLocation>
    <subcellularLocation>
        <location evidence="2">Nucleus</location>
    </subcellularLocation>
    <subcellularLocation>
        <location evidence="3">Mitochondrion outer membrane</location>
    </subcellularLocation>
    <text evidence="3">Found in circular or rod-shaped bodies that colocalizes with mitochondrion marker.</text>
</comment>
<comment type="similarity">
    <text evidence="6">Belongs to the enolase family.</text>
</comment>
<reference key="1">
    <citation type="journal article" date="1991" name="Plant Cell">
        <title>Plant enolase: gene structure, expression, and evolution.</title>
        <authorList>
            <person name="van der Straeten D."/>
            <person name="Rodrigues-Pousada R.A."/>
            <person name="Goodman H.M."/>
            <person name="van Montagu M."/>
        </authorList>
    </citation>
    <scope>NUCLEOTIDE SEQUENCE [GENOMIC DNA]</scope>
</reference>
<reference key="2">
    <citation type="journal article" date="1999" name="Nature">
        <title>Sequence and analysis of chromosome 2 of the plant Arabidopsis thaliana.</title>
        <authorList>
            <person name="Lin X."/>
            <person name="Kaul S."/>
            <person name="Rounsley S.D."/>
            <person name="Shea T.P."/>
            <person name="Benito M.-I."/>
            <person name="Town C.D."/>
            <person name="Fujii C.Y."/>
            <person name="Mason T.M."/>
            <person name="Bowman C.L."/>
            <person name="Barnstead M.E."/>
            <person name="Feldblyum T.V."/>
            <person name="Buell C.R."/>
            <person name="Ketchum K.A."/>
            <person name="Lee J.J."/>
            <person name="Ronning C.M."/>
            <person name="Koo H.L."/>
            <person name="Moffat K.S."/>
            <person name="Cronin L.A."/>
            <person name="Shen M."/>
            <person name="Pai G."/>
            <person name="Van Aken S."/>
            <person name="Umayam L."/>
            <person name="Tallon L.J."/>
            <person name="Gill J.E."/>
            <person name="Adams M.D."/>
            <person name="Carrera A.J."/>
            <person name="Creasy T.H."/>
            <person name="Goodman H.M."/>
            <person name="Somerville C.R."/>
            <person name="Copenhaver G.P."/>
            <person name="Preuss D."/>
            <person name="Nierman W.C."/>
            <person name="White O."/>
            <person name="Eisen J.A."/>
            <person name="Salzberg S.L."/>
            <person name="Fraser C.M."/>
            <person name="Venter J.C."/>
        </authorList>
    </citation>
    <scope>NUCLEOTIDE SEQUENCE [LARGE SCALE GENOMIC DNA]</scope>
    <source>
        <strain>cv. Columbia</strain>
    </source>
</reference>
<reference key="3">
    <citation type="journal article" date="2017" name="Plant J.">
        <title>Araport11: a complete reannotation of the Arabidopsis thaliana reference genome.</title>
        <authorList>
            <person name="Cheng C.Y."/>
            <person name="Krishnakumar V."/>
            <person name="Chan A.P."/>
            <person name="Thibaud-Nissen F."/>
            <person name="Schobel S."/>
            <person name="Town C.D."/>
        </authorList>
    </citation>
    <scope>GENOME REANNOTATION</scope>
    <source>
        <strain>cv. Columbia</strain>
    </source>
</reference>
<reference key="4">
    <citation type="journal article" date="2003" name="Science">
        <title>Empirical analysis of transcriptional activity in the Arabidopsis genome.</title>
        <authorList>
            <person name="Yamada K."/>
            <person name="Lim J."/>
            <person name="Dale J.M."/>
            <person name="Chen H."/>
            <person name="Shinn P."/>
            <person name="Palm C.J."/>
            <person name="Southwick A.M."/>
            <person name="Wu H.C."/>
            <person name="Kim C.J."/>
            <person name="Nguyen M."/>
            <person name="Pham P.K."/>
            <person name="Cheuk R.F."/>
            <person name="Karlin-Newmann G."/>
            <person name="Liu S.X."/>
            <person name="Lam B."/>
            <person name="Sakano H."/>
            <person name="Wu T."/>
            <person name="Yu G."/>
            <person name="Miranda M."/>
            <person name="Quach H.L."/>
            <person name="Tripp M."/>
            <person name="Chang C.H."/>
            <person name="Lee J.M."/>
            <person name="Toriumi M.J."/>
            <person name="Chan M.M."/>
            <person name="Tang C.C."/>
            <person name="Onodera C.S."/>
            <person name="Deng J.M."/>
            <person name="Akiyama K."/>
            <person name="Ansari Y."/>
            <person name="Arakawa T."/>
            <person name="Banh J."/>
            <person name="Banno F."/>
            <person name="Bowser L."/>
            <person name="Brooks S.Y."/>
            <person name="Carninci P."/>
            <person name="Chao Q."/>
            <person name="Choy N."/>
            <person name="Enju A."/>
            <person name="Goldsmith A.D."/>
            <person name="Gurjal M."/>
            <person name="Hansen N.F."/>
            <person name="Hayashizaki Y."/>
            <person name="Johnson-Hopson C."/>
            <person name="Hsuan V.W."/>
            <person name="Iida K."/>
            <person name="Karnes M."/>
            <person name="Khan S."/>
            <person name="Koesema E."/>
            <person name="Ishida J."/>
            <person name="Jiang P.X."/>
            <person name="Jones T."/>
            <person name="Kawai J."/>
            <person name="Kamiya A."/>
            <person name="Meyers C."/>
            <person name="Nakajima M."/>
            <person name="Narusaka M."/>
            <person name="Seki M."/>
            <person name="Sakurai T."/>
            <person name="Satou M."/>
            <person name="Tamse R."/>
            <person name="Vaysberg M."/>
            <person name="Wallender E.K."/>
            <person name="Wong C."/>
            <person name="Yamamura Y."/>
            <person name="Yuan S."/>
            <person name="Shinozaki K."/>
            <person name="Davis R.W."/>
            <person name="Theologis A."/>
            <person name="Ecker J.R."/>
        </authorList>
    </citation>
    <scope>NUCLEOTIDE SEQUENCE [LARGE SCALE MRNA]</scope>
    <source>
        <strain>cv. Columbia</strain>
    </source>
</reference>
<reference key="5">
    <citation type="journal article" date="2002" name="EMBO J.">
        <title>LOS2, a genetic locus required for cold-responsive gene transcription encodes a bi-functional enolase.</title>
        <authorList>
            <person name="Lee H."/>
            <person name="Guo Y."/>
            <person name="Ohta M."/>
            <person name="Xiong L."/>
            <person name="Stevenson B."/>
            <person name="Zhu J.K."/>
        </authorList>
    </citation>
    <scope>FUNCTION</scope>
    <scope>CATALYTIC ACTIVITY</scope>
    <scope>PATHWAY</scope>
    <scope>SUBCELLULAR LOCATION</scope>
    <scope>MUTAGENESIS OF GLY-326</scope>
</reference>
<reference key="6">
    <citation type="journal article" date="2003" name="Plant Cell">
        <title>Enzymes of glycolysis are functionally associated with the mitochondrion in Arabidopsis cells.</title>
        <authorList>
            <person name="Giege P."/>
            <person name="Heazlewood J.L."/>
            <person name="Roessner-Tunali U."/>
            <person name="Millar A.H."/>
            <person name="Fernie A.R."/>
            <person name="Leaver C.J."/>
            <person name="Sweetlove L.J."/>
        </authorList>
    </citation>
    <scope>IDENTIFICATION BY MASS SPECTROMETRY</scope>
    <scope>SUBCELLULAR LOCATION</scope>
</reference>
<reference key="7">
    <citation type="journal article" date="2009" name="J. Proteomics">
        <title>Phosphoproteomic analysis of nuclei-enriched fractions from Arabidopsis thaliana.</title>
        <authorList>
            <person name="Jones A.M.E."/>
            <person name="MacLean D."/>
            <person name="Studholme D.J."/>
            <person name="Serna-Sanz A."/>
            <person name="Andreasson E."/>
            <person name="Rathjen J.P."/>
            <person name="Peck S.C."/>
        </authorList>
    </citation>
    <scope>IDENTIFICATION BY MASS SPECTROMETRY [LARGE SCALE ANALYSIS]</scope>
    <source>
        <strain>cv. Columbia</strain>
    </source>
</reference>
<reference key="8">
    <citation type="journal article" date="2009" name="Plant Cell">
        <title>Quantitative proteomics of the tonoplast reveals a role for glycolytic enzymes in salt tolerance.</title>
        <authorList>
            <person name="Barkla B.J."/>
            <person name="Vera-Estrella R."/>
            <person name="Hernandez-Coronado M."/>
            <person name="Pantoja O."/>
        </authorList>
    </citation>
    <scope>FUNCTION</scope>
</reference>
<evidence type="ECO:0000250" key="1"/>
<evidence type="ECO:0000269" key="2">
    <source>
    </source>
</evidence>
<evidence type="ECO:0000269" key="3">
    <source>
    </source>
</evidence>
<evidence type="ECO:0000269" key="4">
    <source>
    </source>
</evidence>
<evidence type="ECO:0000303" key="5">
    <source>
    </source>
</evidence>
<evidence type="ECO:0000305" key="6"/>
<accession>P25696</accession>
<accession>Q8RWM8</accession>
<accession>Q8VYG4</accession>
<accession>Q940N0</accession>
<organism>
    <name type="scientific">Arabidopsis thaliana</name>
    <name type="common">Mouse-ear cress</name>
    <dbReference type="NCBI Taxonomy" id="3702"/>
    <lineage>
        <taxon>Eukaryota</taxon>
        <taxon>Viridiplantae</taxon>
        <taxon>Streptophyta</taxon>
        <taxon>Embryophyta</taxon>
        <taxon>Tracheophyta</taxon>
        <taxon>Spermatophyta</taxon>
        <taxon>Magnoliopsida</taxon>
        <taxon>eudicotyledons</taxon>
        <taxon>Gunneridae</taxon>
        <taxon>Pentapetalae</taxon>
        <taxon>rosids</taxon>
        <taxon>malvids</taxon>
        <taxon>Brassicales</taxon>
        <taxon>Brassicaceae</taxon>
        <taxon>Camelineae</taxon>
        <taxon>Arabidopsis</taxon>
    </lineage>
</organism>
<protein>
    <recommendedName>
        <fullName>Bifunctional enolase 2/transcriptional activator</fullName>
        <ecNumber evidence="2">4.2.1.11</ecNumber>
    </recommendedName>
    <alternativeName>
        <fullName>2-phospho-D-glycerate hydro-lyase 2</fullName>
    </alternativeName>
    <alternativeName>
        <fullName evidence="5">2-phosphoglycerate dehydratase 2</fullName>
    </alternativeName>
    <alternativeName>
        <fullName>LOW EXPRESSION OF OSMOTICALLY RESPONSIVE GENES 1</fullName>
    </alternativeName>
</protein>
<name>ENO2_ARATH</name>
<sequence length="444" mass="47719">MATITVVKARQIFDSRGNPTVEVDIHTSNGIKVTAAVPSGASTGIYEALELRDGGSDYLGKGVSKAVGNVNNIIGPALIGKDPTQQTAIDNFMVHELDGTQNEWGWCKQKLGANAILAVSLAVCKAGAVVSGIPLYKHIANLAGNPKIVLPVPAFNVINGGSHAGNKLAMQEFMILPVGAASFKEAMKMGVEVYHHLKSVIKKKYGQDATNVGDEGGFAPNIQENKEGLELLKTAIEKAGYTGKVVIGMDVAASEFYSEDKTYDLNFKEENNNGSQKISGDALKDLYKSFVAEYPIVSIEDPFDQDDWEHYAKMTTECGTEVQIVGDDLLVTNPKRVAKAIAEKSCNALLLKVNQIGSVTESIEAVKMSKKAGWGVMTSHRSGETEDTFIADLAVGLSTGQIKTGAPCRSERLAKYNQLLRIEEELGSEAIYAGVNFRKPVEPY</sequence>